<accession>Q0AK27</accession>
<name>DNAA_NITEC</name>
<reference key="1">
    <citation type="journal article" date="2007" name="Environ. Microbiol.">
        <title>Whole-genome analysis of the ammonia-oxidizing bacterium, Nitrosomonas eutropha C91: implications for niche adaptation.</title>
        <authorList>
            <person name="Stein L.Y."/>
            <person name="Arp D.J."/>
            <person name="Berube P.M."/>
            <person name="Chain P.S."/>
            <person name="Hauser L."/>
            <person name="Jetten M.S."/>
            <person name="Klotz M.G."/>
            <person name="Larimer F.W."/>
            <person name="Norton J.M."/>
            <person name="Op den Camp H.J.M."/>
            <person name="Shin M."/>
            <person name="Wei X."/>
        </authorList>
    </citation>
    <scope>NUCLEOTIDE SEQUENCE [LARGE SCALE GENOMIC DNA]</scope>
    <source>
        <strain>DSM 101675 / C91 / Nm57</strain>
    </source>
</reference>
<gene>
    <name evidence="1" type="primary">dnaA</name>
    <name type="ordered locus">Neut_0001</name>
</gene>
<comment type="function">
    <text evidence="1">Plays an essential role in the initiation and regulation of chromosomal replication. ATP-DnaA binds to the origin of replication (oriC) to initiate formation of the DNA replication initiation complex once per cell cycle. Binds the DnaA box (a 9 base pair repeat at the origin) and separates the double-stranded (ds)DNA. Forms a right-handed helical filament on oriC DNA; dsDNA binds to the exterior of the filament while single-stranded (ss)DNA is stabiized in the filament's interior. The ATP-DnaA-oriC complex binds and stabilizes one strand of the AT-rich DNA unwinding element (DUE), permitting loading of DNA polymerase. After initiation quickly degrades to an ADP-DnaA complex that is not apt for DNA replication. Binds acidic phospholipids.</text>
</comment>
<comment type="subunit">
    <text evidence="1">Oligomerizes as a right-handed, spiral filament on DNA at oriC.</text>
</comment>
<comment type="subcellular location">
    <subcellularLocation>
        <location evidence="1">Cytoplasm</location>
    </subcellularLocation>
</comment>
<comment type="domain">
    <text evidence="1">Domain I is involved in oligomerization and binding regulators, domain II is flexibile and of varying length in different bacteria, domain III forms the AAA+ region, while domain IV binds dsDNA.</text>
</comment>
<comment type="similarity">
    <text evidence="1">Belongs to the DnaA family.</text>
</comment>
<dbReference type="EMBL" id="CP000450">
    <property type="protein sequence ID" value="ABI58294.1"/>
    <property type="molecule type" value="Genomic_DNA"/>
</dbReference>
<dbReference type="RefSeq" id="WP_011633139.1">
    <property type="nucleotide sequence ID" value="NC_008344.1"/>
</dbReference>
<dbReference type="SMR" id="Q0AK27"/>
<dbReference type="STRING" id="335283.Neut_0001"/>
<dbReference type="KEGG" id="net:Neut_0001"/>
<dbReference type="eggNOG" id="COG0593">
    <property type="taxonomic scope" value="Bacteria"/>
</dbReference>
<dbReference type="HOGENOM" id="CLU_026910_0_1_4"/>
<dbReference type="OrthoDB" id="9807019at2"/>
<dbReference type="Proteomes" id="UP000001966">
    <property type="component" value="Chromosome"/>
</dbReference>
<dbReference type="GO" id="GO:0005737">
    <property type="term" value="C:cytoplasm"/>
    <property type="evidence" value="ECO:0007669"/>
    <property type="project" value="UniProtKB-SubCell"/>
</dbReference>
<dbReference type="GO" id="GO:0005886">
    <property type="term" value="C:plasma membrane"/>
    <property type="evidence" value="ECO:0007669"/>
    <property type="project" value="TreeGrafter"/>
</dbReference>
<dbReference type="GO" id="GO:0005524">
    <property type="term" value="F:ATP binding"/>
    <property type="evidence" value="ECO:0007669"/>
    <property type="project" value="UniProtKB-UniRule"/>
</dbReference>
<dbReference type="GO" id="GO:0016887">
    <property type="term" value="F:ATP hydrolysis activity"/>
    <property type="evidence" value="ECO:0007669"/>
    <property type="project" value="InterPro"/>
</dbReference>
<dbReference type="GO" id="GO:0003688">
    <property type="term" value="F:DNA replication origin binding"/>
    <property type="evidence" value="ECO:0007669"/>
    <property type="project" value="UniProtKB-UniRule"/>
</dbReference>
<dbReference type="GO" id="GO:0008289">
    <property type="term" value="F:lipid binding"/>
    <property type="evidence" value="ECO:0007669"/>
    <property type="project" value="UniProtKB-KW"/>
</dbReference>
<dbReference type="GO" id="GO:0006270">
    <property type="term" value="P:DNA replication initiation"/>
    <property type="evidence" value="ECO:0007669"/>
    <property type="project" value="UniProtKB-UniRule"/>
</dbReference>
<dbReference type="GO" id="GO:0006275">
    <property type="term" value="P:regulation of DNA replication"/>
    <property type="evidence" value="ECO:0007669"/>
    <property type="project" value="UniProtKB-UniRule"/>
</dbReference>
<dbReference type="CDD" id="cd00009">
    <property type="entry name" value="AAA"/>
    <property type="match status" value="1"/>
</dbReference>
<dbReference type="CDD" id="cd06571">
    <property type="entry name" value="Bac_DnaA_C"/>
    <property type="match status" value="1"/>
</dbReference>
<dbReference type="FunFam" id="1.10.8.60:FF:000003">
    <property type="entry name" value="Chromosomal replication initiator protein DnaA"/>
    <property type="match status" value="1"/>
</dbReference>
<dbReference type="FunFam" id="3.40.50.300:FF:000668">
    <property type="entry name" value="Chromosomal replication initiator protein DnaA"/>
    <property type="match status" value="1"/>
</dbReference>
<dbReference type="Gene3D" id="1.10.1750.10">
    <property type="match status" value="1"/>
</dbReference>
<dbReference type="Gene3D" id="1.10.8.60">
    <property type="match status" value="1"/>
</dbReference>
<dbReference type="Gene3D" id="3.30.300.180">
    <property type="match status" value="1"/>
</dbReference>
<dbReference type="Gene3D" id="3.40.50.300">
    <property type="entry name" value="P-loop containing nucleotide triphosphate hydrolases"/>
    <property type="match status" value="1"/>
</dbReference>
<dbReference type="HAMAP" id="MF_00377">
    <property type="entry name" value="DnaA_bact"/>
    <property type="match status" value="1"/>
</dbReference>
<dbReference type="InterPro" id="IPR003593">
    <property type="entry name" value="AAA+_ATPase"/>
</dbReference>
<dbReference type="InterPro" id="IPR001957">
    <property type="entry name" value="Chromosome_initiator_DnaA"/>
</dbReference>
<dbReference type="InterPro" id="IPR020591">
    <property type="entry name" value="Chromosome_initiator_DnaA-like"/>
</dbReference>
<dbReference type="InterPro" id="IPR018312">
    <property type="entry name" value="Chromosome_initiator_DnaA_CS"/>
</dbReference>
<dbReference type="InterPro" id="IPR013159">
    <property type="entry name" value="DnaA_C"/>
</dbReference>
<dbReference type="InterPro" id="IPR013317">
    <property type="entry name" value="DnaA_dom"/>
</dbReference>
<dbReference type="InterPro" id="IPR024633">
    <property type="entry name" value="DnaA_N_dom"/>
</dbReference>
<dbReference type="InterPro" id="IPR038454">
    <property type="entry name" value="DnaA_N_sf"/>
</dbReference>
<dbReference type="InterPro" id="IPR027417">
    <property type="entry name" value="P-loop_NTPase"/>
</dbReference>
<dbReference type="InterPro" id="IPR010921">
    <property type="entry name" value="Trp_repressor/repl_initiator"/>
</dbReference>
<dbReference type="NCBIfam" id="TIGR00362">
    <property type="entry name" value="DnaA"/>
    <property type="match status" value="1"/>
</dbReference>
<dbReference type="PANTHER" id="PTHR30050">
    <property type="entry name" value="CHROMOSOMAL REPLICATION INITIATOR PROTEIN DNAA"/>
    <property type="match status" value="1"/>
</dbReference>
<dbReference type="PANTHER" id="PTHR30050:SF2">
    <property type="entry name" value="CHROMOSOMAL REPLICATION INITIATOR PROTEIN DNAA"/>
    <property type="match status" value="1"/>
</dbReference>
<dbReference type="Pfam" id="PF00308">
    <property type="entry name" value="Bac_DnaA"/>
    <property type="match status" value="1"/>
</dbReference>
<dbReference type="Pfam" id="PF08299">
    <property type="entry name" value="Bac_DnaA_C"/>
    <property type="match status" value="1"/>
</dbReference>
<dbReference type="Pfam" id="PF11638">
    <property type="entry name" value="DnaA_N"/>
    <property type="match status" value="1"/>
</dbReference>
<dbReference type="PRINTS" id="PR00051">
    <property type="entry name" value="DNAA"/>
</dbReference>
<dbReference type="SMART" id="SM00382">
    <property type="entry name" value="AAA"/>
    <property type="match status" value="1"/>
</dbReference>
<dbReference type="SMART" id="SM00760">
    <property type="entry name" value="Bac_DnaA_C"/>
    <property type="match status" value="1"/>
</dbReference>
<dbReference type="SUPFAM" id="SSF52540">
    <property type="entry name" value="P-loop containing nucleoside triphosphate hydrolases"/>
    <property type="match status" value="1"/>
</dbReference>
<dbReference type="SUPFAM" id="SSF48295">
    <property type="entry name" value="TrpR-like"/>
    <property type="match status" value="1"/>
</dbReference>
<dbReference type="PROSITE" id="PS01008">
    <property type="entry name" value="DNAA"/>
    <property type="match status" value="1"/>
</dbReference>
<feature type="chain" id="PRO_1000048678" description="Chromosomal replication initiator protein DnaA">
    <location>
        <begin position="1"/>
        <end position="459"/>
    </location>
</feature>
<feature type="region of interest" description="Domain I, interacts with DnaA modulators" evidence="1">
    <location>
        <begin position="1"/>
        <end position="74"/>
    </location>
</feature>
<feature type="region of interest" description="Domain II" evidence="1">
    <location>
        <begin position="74"/>
        <end position="122"/>
    </location>
</feature>
<feature type="region of interest" description="Disordered" evidence="2">
    <location>
        <begin position="91"/>
        <end position="123"/>
    </location>
</feature>
<feature type="region of interest" description="Domain III, AAA+ region" evidence="1">
    <location>
        <begin position="123"/>
        <end position="339"/>
    </location>
</feature>
<feature type="region of interest" description="Domain IV, binds dsDNA" evidence="1">
    <location>
        <begin position="340"/>
        <end position="459"/>
    </location>
</feature>
<feature type="compositionally biased region" description="Basic and acidic residues" evidence="2">
    <location>
        <begin position="96"/>
        <end position="112"/>
    </location>
</feature>
<feature type="binding site" evidence="1">
    <location>
        <position position="167"/>
    </location>
    <ligand>
        <name>ATP</name>
        <dbReference type="ChEBI" id="CHEBI:30616"/>
    </ligand>
</feature>
<feature type="binding site" evidence="1">
    <location>
        <position position="169"/>
    </location>
    <ligand>
        <name>ATP</name>
        <dbReference type="ChEBI" id="CHEBI:30616"/>
    </ligand>
</feature>
<feature type="binding site" evidence="1">
    <location>
        <position position="170"/>
    </location>
    <ligand>
        <name>ATP</name>
        <dbReference type="ChEBI" id="CHEBI:30616"/>
    </ligand>
</feature>
<feature type="binding site" evidence="1">
    <location>
        <position position="171"/>
    </location>
    <ligand>
        <name>ATP</name>
        <dbReference type="ChEBI" id="CHEBI:30616"/>
    </ligand>
</feature>
<keyword id="KW-0067">ATP-binding</keyword>
<keyword id="KW-0963">Cytoplasm</keyword>
<keyword id="KW-0235">DNA replication</keyword>
<keyword id="KW-0238">DNA-binding</keyword>
<keyword id="KW-0446">Lipid-binding</keyword>
<keyword id="KW-0547">Nucleotide-binding</keyword>
<sequence length="459" mass="52381">MQKIETFWYFCLKHFKQELNGQQFNTWIKPLKLEICPDVENTLVLIAPNRFVLQWIKDNFVNRIDEMAQGHFNEKIHFKLELKDPAEIKTATIKAPEPKSKEDKKPPTDKAHGTTARKTNPSRLNPAFTFDAFVTGKANQLARAGAIQVAERPGIAYNPLFIYGGVGLGKTHLMHAVGNYVMELDAGAKIRYVHAEKYVSDVVSAYQHKSFDKFKLYYHSLDLLLVDDVQFFSGKNRTQEEFFYAFNALIEAHKQVIITSDCYPKEISGLEERLVSRFGWGLTVAIEPPELEMRVAILLKKAFIEKIELDESTAFFIAKYIRSNVRELEGALKRVLAYSRFTGHPISLDLAKEALKDLLAIQNRQISIENIQKTVADYYKIKVADMYSKKRVRAIARPRQVAMAIAKELTQLSLPDIGEAFGGRDHTTVLHAHRKIVELRASDPGINRDYSTLIHILRG</sequence>
<organism>
    <name type="scientific">Nitrosomonas eutropha (strain DSM 101675 / C91 / Nm57)</name>
    <dbReference type="NCBI Taxonomy" id="335283"/>
    <lineage>
        <taxon>Bacteria</taxon>
        <taxon>Pseudomonadati</taxon>
        <taxon>Pseudomonadota</taxon>
        <taxon>Betaproteobacteria</taxon>
        <taxon>Nitrosomonadales</taxon>
        <taxon>Nitrosomonadaceae</taxon>
        <taxon>Nitrosomonas</taxon>
    </lineage>
</organism>
<proteinExistence type="inferred from homology"/>
<evidence type="ECO:0000255" key="1">
    <source>
        <dbReference type="HAMAP-Rule" id="MF_00377"/>
    </source>
</evidence>
<evidence type="ECO:0000256" key="2">
    <source>
        <dbReference type="SAM" id="MobiDB-lite"/>
    </source>
</evidence>
<protein>
    <recommendedName>
        <fullName evidence="1">Chromosomal replication initiator protein DnaA</fullName>
    </recommendedName>
</protein>